<reference key="1">
    <citation type="journal article" date="2006" name="BMC Plant Biol.">
        <title>Rapid and accurate pyrosequencing of angiosperm plastid genomes.</title>
        <authorList>
            <person name="Moore M.J."/>
            <person name="Dhingra A."/>
            <person name="Soltis P.S."/>
            <person name="Shaw R."/>
            <person name="Farmerie W.G."/>
            <person name="Folta K.M."/>
            <person name="Soltis D.E."/>
        </authorList>
    </citation>
    <scope>NUCLEOTIDE SEQUENCE [LARGE SCALE GENOMIC DNA]</scope>
</reference>
<proteinExistence type="inferred from homology"/>
<sequence>MAKGKDVRVRVILECINCVRNGVNKESPGVSRYITQKNRHNTPSRLELRKFCPYCFKHTIHGEIKK</sequence>
<name>RK33_PLAOC</name>
<evidence type="ECO:0000255" key="1">
    <source>
        <dbReference type="HAMAP-Rule" id="MF_00294"/>
    </source>
</evidence>
<evidence type="ECO:0000305" key="2"/>
<protein>
    <recommendedName>
        <fullName evidence="1">Large ribosomal subunit protein bL33c</fullName>
    </recommendedName>
    <alternativeName>
        <fullName evidence="2">50S ribosomal protein L33, chloroplastic</fullName>
    </alternativeName>
</protein>
<gene>
    <name evidence="1" type="primary">rpl33</name>
</gene>
<geneLocation type="chloroplast"/>
<feature type="chain" id="PRO_0000356821" description="Large ribosomal subunit protein bL33c">
    <location>
        <begin position="1"/>
        <end position="66"/>
    </location>
</feature>
<accession>Q09G25</accession>
<organism>
    <name type="scientific">Platanus occidentalis</name>
    <name type="common">Sycamore</name>
    <name type="synonym">American plane tree</name>
    <dbReference type="NCBI Taxonomy" id="4403"/>
    <lineage>
        <taxon>Eukaryota</taxon>
        <taxon>Viridiplantae</taxon>
        <taxon>Streptophyta</taxon>
        <taxon>Embryophyta</taxon>
        <taxon>Tracheophyta</taxon>
        <taxon>Spermatophyta</taxon>
        <taxon>Magnoliopsida</taxon>
        <taxon>Proteales</taxon>
        <taxon>Platanaceae</taxon>
        <taxon>Platanus</taxon>
    </lineage>
</organism>
<dbReference type="EMBL" id="DQ923116">
    <property type="protein sequence ID" value="ABI49799.1"/>
    <property type="molecule type" value="Genomic_DNA"/>
</dbReference>
<dbReference type="RefSeq" id="YP_740586.1">
    <property type="nucleotide sequence ID" value="NC_008335.1"/>
</dbReference>
<dbReference type="GeneID" id="4271248"/>
<dbReference type="GO" id="GO:0009507">
    <property type="term" value="C:chloroplast"/>
    <property type="evidence" value="ECO:0007669"/>
    <property type="project" value="UniProtKB-SubCell"/>
</dbReference>
<dbReference type="GO" id="GO:1990904">
    <property type="term" value="C:ribonucleoprotein complex"/>
    <property type="evidence" value="ECO:0007669"/>
    <property type="project" value="UniProtKB-KW"/>
</dbReference>
<dbReference type="GO" id="GO:0005840">
    <property type="term" value="C:ribosome"/>
    <property type="evidence" value="ECO:0007669"/>
    <property type="project" value="UniProtKB-KW"/>
</dbReference>
<dbReference type="GO" id="GO:0003735">
    <property type="term" value="F:structural constituent of ribosome"/>
    <property type="evidence" value="ECO:0007669"/>
    <property type="project" value="InterPro"/>
</dbReference>
<dbReference type="GO" id="GO:0006412">
    <property type="term" value="P:translation"/>
    <property type="evidence" value="ECO:0007669"/>
    <property type="project" value="UniProtKB-UniRule"/>
</dbReference>
<dbReference type="Gene3D" id="2.20.28.120">
    <property type="entry name" value="Ribosomal protein L33"/>
    <property type="match status" value="1"/>
</dbReference>
<dbReference type="HAMAP" id="MF_00294">
    <property type="entry name" value="Ribosomal_bL33"/>
    <property type="match status" value="1"/>
</dbReference>
<dbReference type="InterPro" id="IPR001705">
    <property type="entry name" value="Ribosomal_bL33"/>
</dbReference>
<dbReference type="InterPro" id="IPR018264">
    <property type="entry name" value="Ribosomal_bL33_CS"/>
</dbReference>
<dbReference type="InterPro" id="IPR038584">
    <property type="entry name" value="Ribosomal_bL33_sf"/>
</dbReference>
<dbReference type="InterPro" id="IPR011332">
    <property type="entry name" value="Ribosomal_zn-bd"/>
</dbReference>
<dbReference type="NCBIfam" id="NF001764">
    <property type="entry name" value="PRK00504.1"/>
    <property type="match status" value="1"/>
</dbReference>
<dbReference type="NCBIfam" id="NF001860">
    <property type="entry name" value="PRK00595.1"/>
    <property type="match status" value="1"/>
</dbReference>
<dbReference type="NCBIfam" id="TIGR01023">
    <property type="entry name" value="rpmG_bact"/>
    <property type="match status" value="1"/>
</dbReference>
<dbReference type="PANTHER" id="PTHR43168">
    <property type="entry name" value="50S RIBOSOMAL PROTEIN L33, CHLOROPLASTIC"/>
    <property type="match status" value="1"/>
</dbReference>
<dbReference type="PANTHER" id="PTHR43168:SF2">
    <property type="entry name" value="LARGE RIBOSOMAL SUBUNIT PROTEIN BL33C"/>
    <property type="match status" value="1"/>
</dbReference>
<dbReference type="Pfam" id="PF00471">
    <property type="entry name" value="Ribosomal_L33"/>
    <property type="match status" value="1"/>
</dbReference>
<dbReference type="SUPFAM" id="SSF57829">
    <property type="entry name" value="Zn-binding ribosomal proteins"/>
    <property type="match status" value="1"/>
</dbReference>
<dbReference type="PROSITE" id="PS00582">
    <property type="entry name" value="RIBOSOMAL_L33"/>
    <property type="match status" value="1"/>
</dbReference>
<keyword id="KW-0150">Chloroplast</keyword>
<keyword id="KW-0934">Plastid</keyword>
<keyword id="KW-0687">Ribonucleoprotein</keyword>
<keyword id="KW-0689">Ribosomal protein</keyword>
<comment type="subcellular location">
    <subcellularLocation>
        <location>Plastid</location>
        <location>Chloroplast</location>
    </subcellularLocation>
</comment>
<comment type="similarity">
    <text evidence="1">Belongs to the bacterial ribosomal protein bL33 family.</text>
</comment>